<feature type="chain" id="PRO_0000073637" description="Secretagogin">
    <location>
        <begin position="1"/>
        <end position="276"/>
    </location>
</feature>
<feature type="domain" description="EF-hand 1" evidence="2">
    <location>
        <begin position="12"/>
        <end position="47"/>
    </location>
</feature>
<feature type="domain" description="EF-hand 2" evidence="2">
    <location>
        <begin position="58"/>
        <end position="93"/>
    </location>
</feature>
<feature type="domain" description="EF-hand 3" evidence="2">
    <location>
        <begin position="105"/>
        <end position="140"/>
    </location>
</feature>
<feature type="domain" description="EF-hand 4" evidence="2">
    <location>
        <begin position="149"/>
        <end position="184"/>
    </location>
</feature>
<feature type="domain" description="EF-hand 5" evidence="2">
    <location>
        <begin position="197"/>
        <end position="232"/>
    </location>
</feature>
<feature type="domain" description="EF-hand 6" evidence="2">
    <location>
        <begin position="240"/>
        <end position="276"/>
    </location>
</feature>
<feature type="binding site" evidence="3">
    <location>
        <position position="25"/>
    </location>
    <ligand>
        <name>Ca(2+)</name>
        <dbReference type="ChEBI" id="CHEBI:29108"/>
        <label>1</label>
    </ligand>
</feature>
<feature type="binding site" evidence="3">
    <location>
        <position position="31"/>
    </location>
    <ligand>
        <name>Ca(2+)</name>
        <dbReference type="ChEBI" id="CHEBI:29108"/>
        <label>1</label>
    </ligand>
</feature>
<feature type="binding site" evidence="3">
    <location>
        <position position="36"/>
    </location>
    <ligand>
        <name>Ca(2+)</name>
        <dbReference type="ChEBI" id="CHEBI:29108"/>
        <label>1</label>
    </ligand>
</feature>
<feature type="binding site" evidence="3">
    <location>
        <position position="73"/>
    </location>
    <ligand>
        <name>Ca(2+)</name>
        <dbReference type="ChEBI" id="CHEBI:29108"/>
        <label>2</label>
    </ligand>
</feature>
<feature type="binding site" evidence="3">
    <location>
        <position position="75"/>
    </location>
    <ligand>
        <name>Ca(2+)</name>
        <dbReference type="ChEBI" id="CHEBI:29108"/>
        <label>2</label>
    </ligand>
</feature>
<feature type="binding site" evidence="3">
    <location>
        <position position="77"/>
    </location>
    <ligand>
        <name>Ca(2+)</name>
        <dbReference type="ChEBI" id="CHEBI:29108"/>
        <label>2</label>
    </ligand>
</feature>
<feature type="binding site" evidence="3">
    <location>
        <position position="82"/>
    </location>
    <ligand>
        <name>Ca(2+)</name>
        <dbReference type="ChEBI" id="CHEBI:29108"/>
        <label>2</label>
    </ligand>
</feature>
<feature type="binding site" evidence="2">
    <location>
        <position position="118"/>
    </location>
    <ligand>
        <name>Ca(2+)</name>
        <dbReference type="ChEBI" id="CHEBI:29108"/>
        <label>3</label>
    </ligand>
</feature>
<feature type="binding site" evidence="2">
    <location>
        <position position="120"/>
    </location>
    <ligand>
        <name>Ca(2+)</name>
        <dbReference type="ChEBI" id="CHEBI:29108"/>
        <label>3</label>
    </ligand>
</feature>
<feature type="binding site" evidence="2">
    <location>
        <position position="122"/>
    </location>
    <ligand>
        <name>Ca(2+)</name>
        <dbReference type="ChEBI" id="CHEBI:29108"/>
        <label>3</label>
    </ligand>
</feature>
<feature type="binding site" evidence="2">
    <location>
        <position position="129"/>
    </location>
    <ligand>
        <name>Ca(2+)</name>
        <dbReference type="ChEBI" id="CHEBI:29108"/>
        <label>3</label>
    </ligand>
</feature>
<feature type="binding site" evidence="2">
    <location>
        <position position="162"/>
    </location>
    <ligand>
        <name>Ca(2+)</name>
        <dbReference type="ChEBI" id="CHEBI:29108"/>
        <label>4</label>
    </ligand>
</feature>
<feature type="binding site" evidence="2">
    <location>
        <position position="164"/>
    </location>
    <ligand>
        <name>Ca(2+)</name>
        <dbReference type="ChEBI" id="CHEBI:29108"/>
        <label>4</label>
    </ligand>
</feature>
<feature type="binding site" evidence="2">
    <location>
        <position position="166"/>
    </location>
    <ligand>
        <name>Ca(2+)</name>
        <dbReference type="ChEBI" id="CHEBI:29108"/>
        <label>4</label>
    </ligand>
</feature>
<feature type="binding site" evidence="2">
    <location>
        <position position="168"/>
    </location>
    <ligand>
        <name>Ca(2+)</name>
        <dbReference type="ChEBI" id="CHEBI:29108"/>
        <label>4</label>
    </ligand>
</feature>
<feature type="binding site" evidence="2">
    <location>
        <position position="173"/>
    </location>
    <ligand>
        <name>Ca(2+)</name>
        <dbReference type="ChEBI" id="CHEBI:29108"/>
        <label>4</label>
    </ligand>
</feature>
<feature type="binding site" evidence="2">
    <location>
        <position position="210"/>
    </location>
    <ligand>
        <name>Ca(2+)</name>
        <dbReference type="ChEBI" id="CHEBI:29108"/>
        <label>5</label>
    </ligand>
</feature>
<feature type="binding site" evidence="2">
    <location>
        <position position="212"/>
    </location>
    <ligand>
        <name>Ca(2+)</name>
        <dbReference type="ChEBI" id="CHEBI:29108"/>
        <label>5</label>
    </ligand>
</feature>
<feature type="binding site" evidence="2">
    <location>
        <position position="214"/>
    </location>
    <ligand>
        <name>Ca(2+)</name>
        <dbReference type="ChEBI" id="CHEBI:29108"/>
        <label>5</label>
    </ligand>
</feature>
<feature type="binding site" evidence="2">
    <location>
        <position position="221"/>
    </location>
    <ligand>
        <name>Ca(2+)</name>
        <dbReference type="ChEBI" id="CHEBI:29108"/>
        <label>5</label>
    </ligand>
</feature>
<feature type="binding site" evidence="2">
    <location>
        <position position="254"/>
    </location>
    <ligand>
        <name>Ca(2+)</name>
        <dbReference type="ChEBI" id="CHEBI:29108"/>
        <label>6</label>
    </ligand>
</feature>
<feature type="binding site" evidence="2">
    <location>
        <position position="256"/>
    </location>
    <ligand>
        <name>Ca(2+)</name>
        <dbReference type="ChEBI" id="CHEBI:29108"/>
        <label>6</label>
    </ligand>
</feature>
<feature type="binding site" evidence="2">
    <location>
        <position position="258"/>
    </location>
    <ligand>
        <name>Ca(2+)</name>
        <dbReference type="ChEBI" id="CHEBI:29108"/>
        <label>6</label>
    </ligand>
</feature>
<feature type="binding site" evidence="2">
    <location>
        <position position="260"/>
    </location>
    <ligand>
        <name>Ca(2+)</name>
        <dbReference type="ChEBI" id="CHEBI:29108"/>
        <label>6</label>
    </ligand>
</feature>
<feature type="binding site" evidence="2">
    <location>
        <position position="265"/>
    </location>
    <ligand>
        <name>Ca(2+)</name>
        <dbReference type="ChEBI" id="CHEBI:29108"/>
        <label>6</label>
    </ligand>
</feature>
<feature type="helix" evidence="4">
    <location>
        <begin position="14"/>
        <end position="22"/>
    </location>
</feature>
<feature type="strand" evidence="4">
    <location>
        <begin position="30"/>
        <end position="32"/>
    </location>
</feature>
<feature type="helix" evidence="4">
    <location>
        <begin position="37"/>
        <end position="45"/>
    </location>
</feature>
<feature type="helix" evidence="4">
    <location>
        <begin position="54"/>
        <end position="64"/>
    </location>
</feature>
<feature type="helix" evidence="4">
    <location>
        <begin position="80"/>
        <end position="87"/>
    </location>
</feature>
<feature type="helix" evidence="4">
    <location>
        <begin position="90"/>
        <end position="97"/>
    </location>
</feature>
<feature type="helix" evidence="4">
    <location>
        <begin position="98"/>
        <end position="101"/>
    </location>
</feature>
<feature type="helix" evidence="4">
    <location>
        <begin position="107"/>
        <end position="117"/>
    </location>
</feature>
<feature type="strand" evidence="4">
    <location>
        <begin position="123"/>
        <end position="125"/>
    </location>
</feature>
<feature type="helix" evidence="4">
    <location>
        <begin position="127"/>
        <end position="140"/>
    </location>
</feature>
<feature type="helix" evidence="4">
    <location>
        <begin position="147"/>
        <end position="161"/>
    </location>
</feature>
<feature type="helix" evidence="4">
    <location>
        <begin position="171"/>
        <end position="177"/>
    </location>
</feature>
<feature type="helix" evidence="4">
    <location>
        <begin position="184"/>
        <end position="187"/>
    </location>
</feature>
<feature type="helix" evidence="4">
    <location>
        <begin position="195"/>
        <end position="209"/>
    </location>
</feature>
<feature type="strand" evidence="4">
    <location>
        <begin position="214"/>
        <end position="217"/>
    </location>
</feature>
<feature type="helix" evidence="4">
    <location>
        <begin position="220"/>
        <end position="230"/>
    </location>
</feature>
<feature type="turn" evidence="4">
    <location>
        <begin position="231"/>
        <end position="233"/>
    </location>
</feature>
<feature type="helix" evidence="4">
    <location>
        <begin position="239"/>
        <end position="253"/>
    </location>
</feature>
<feature type="strand" evidence="4">
    <location>
        <begin position="258"/>
        <end position="262"/>
    </location>
</feature>
<feature type="helix" evidence="4">
    <location>
        <begin position="263"/>
        <end position="269"/>
    </location>
</feature>
<dbReference type="EMBL" id="BC016093">
    <property type="protein sequence ID" value="AAH16093.1"/>
    <property type="molecule type" value="mRNA"/>
</dbReference>
<dbReference type="CCDS" id="CCDS26375.1"/>
<dbReference type="RefSeq" id="NP_663374.1">
    <property type="nucleotide sequence ID" value="NM_145399.1"/>
</dbReference>
<dbReference type="PDB" id="8BAN">
    <property type="method" value="X-ray"/>
    <property type="resolution" value="2.35 A"/>
    <property type="chains" value="C/D=1-276"/>
</dbReference>
<dbReference type="PDB" id="8BBJ">
    <property type="method" value="X-ray"/>
    <property type="resolution" value="2.65 A"/>
    <property type="chains" value="C/D=90-276"/>
</dbReference>
<dbReference type="PDBsum" id="8BAN"/>
<dbReference type="PDBsum" id="8BBJ"/>
<dbReference type="SMR" id="Q91WD9"/>
<dbReference type="BioGRID" id="229503">
    <property type="interactions" value="1"/>
</dbReference>
<dbReference type="FunCoup" id="Q91WD9">
    <property type="interactions" value="25"/>
</dbReference>
<dbReference type="IntAct" id="Q91WD9">
    <property type="interactions" value="1"/>
</dbReference>
<dbReference type="MINT" id="Q91WD9"/>
<dbReference type="STRING" id="10090.ENSMUSP00000021770"/>
<dbReference type="GlyGen" id="Q91WD9">
    <property type="glycosylation" value="1 site, 1 N-linked glycan (1 site)"/>
</dbReference>
<dbReference type="iPTMnet" id="Q91WD9"/>
<dbReference type="PhosphoSitePlus" id="Q91WD9"/>
<dbReference type="PaxDb" id="10090-ENSMUSP00000021770"/>
<dbReference type="PeptideAtlas" id="Q91WD9"/>
<dbReference type="ProteomicsDB" id="261146"/>
<dbReference type="Antibodypedia" id="1357">
    <property type="antibodies" value="352 antibodies from 35 providers"/>
</dbReference>
<dbReference type="DNASU" id="214189"/>
<dbReference type="Ensembl" id="ENSMUST00000021770.8">
    <property type="protein sequence ID" value="ENSMUSP00000021770.8"/>
    <property type="gene ID" value="ENSMUSG00000021337.9"/>
</dbReference>
<dbReference type="GeneID" id="214189"/>
<dbReference type="KEGG" id="mmu:214189"/>
<dbReference type="UCSC" id="uc007pvk.1">
    <property type="organism name" value="mouse"/>
</dbReference>
<dbReference type="AGR" id="MGI:2384873"/>
<dbReference type="CTD" id="10590"/>
<dbReference type="MGI" id="MGI:2384873">
    <property type="gene designation" value="Scgn"/>
</dbReference>
<dbReference type="VEuPathDB" id="HostDB:ENSMUSG00000021337"/>
<dbReference type="eggNOG" id="KOG0027">
    <property type="taxonomic scope" value="Eukaryota"/>
</dbReference>
<dbReference type="GeneTree" id="ENSGT00950000183108"/>
<dbReference type="HOGENOM" id="CLU_054826_1_1_1"/>
<dbReference type="InParanoid" id="Q91WD9"/>
<dbReference type="OMA" id="GFWQIWQ"/>
<dbReference type="OrthoDB" id="428774at2759"/>
<dbReference type="PhylomeDB" id="Q91WD9"/>
<dbReference type="TreeFam" id="TF325083"/>
<dbReference type="BioGRID-ORCS" id="214189">
    <property type="hits" value="5 hits in 77 CRISPR screens"/>
</dbReference>
<dbReference type="PRO" id="PR:Q91WD9"/>
<dbReference type="Proteomes" id="UP000000589">
    <property type="component" value="Chromosome 13"/>
</dbReference>
<dbReference type="RNAct" id="Q91WD9">
    <property type="molecule type" value="protein"/>
</dbReference>
<dbReference type="Bgee" id="ENSMUSG00000021337">
    <property type="expression patterns" value="Expressed in islet of Langerhans and 64 other cell types or tissues"/>
</dbReference>
<dbReference type="ExpressionAtlas" id="Q91WD9">
    <property type="expression patterns" value="baseline and differential"/>
</dbReference>
<dbReference type="GO" id="GO:0005576">
    <property type="term" value="C:extracellular region"/>
    <property type="evidence" value="ECO:0007669"/>
    <property type="project" value="UniProtKB-SubCell"/>
</dbReference>
<dbReference type="GO" id="GO:0030658">
    <property type="term" value="C:transport vesicle membrane"/>
    <property type="evidence" value="ECO:0007669"/>
    <property type="project" value="UniProtKB-SubCell"/>
</dbReference>
<dbReference type="GO" id="GO:0005509">
    <property type="term" value="F:calcium ion binding"/>
    <property type="evidence" value="ECO:0007669"/>
    <property type="project" value="InterPro"/>
</dbReference>
<dbReference type="CDD" id="cd16178">
    <property type="entry name" value="EFh_HEF_SCGN"/>
    <property type="match status" value="1"/>
</dbReference>
<dbReference type="FunFam" id="1.10.238.10:FF:000142">
    <property type="entry name" value="Secretagogin"/>
    <property type="match status" value="1"/>
</dbReference>
<dbReference type="FunFam" id="1.10.238.10:FF:000186">
    <property type="entry name" value="Secretagogin"/>
    <property type="match status" value="1"/>
</dbReference>
<dbReference type="FunFam" id="1.10.238.10:FF:000222">
    <property type="entry name" value="Secretagogin"/>
    <property type="match status" value="1"/>
</dbReference>
<dbReference type="Gene3D" id="1.10.238.10">
    <property type="entry name" value="EF-hand"/>
    <property type="match status" value="3"/>
</dbReference>
<dbReference type="InterPro" id="IPR051001">
    <property type="entry name" value="Calbindin_Ca-bind"/>
</dbReference>
<dbReference type="InterPro" id="IPR011992">
    <property type="entry name" value="EF-hand-dom_pair"/>
</dbReference>
<dbReference type="InterPro" id="IPR018247">
    <property type="entry name" value="EF_Hand_1_Ca_BS"/>
</dbReference>
<dbReference type="InterPro" id="IPR002048">
    <property type="entry name" value="EF_hand_dom"/>
</dbReference>
<dbReference type="InterPro" id="IPR035798">
    <property type="entry name" value="EFh_SCGN"/>
</dbReference>
<dbReference type="PANTHER" id="PTHR19972">
    <property type="entry name" value="CALBINDIN"/>
    <property type="match status" value="1"/>
</dbReference>
<dbReference type="PANTHER" id="PTHR19972:SF15">
    <property type="entry name" value="SECRETAGOGIN"/>
    <property type="match status" value="1"/>
</dbReference>
<dbReference type="Pfam" id="PF13202">
    <property type="entry name" value="EF-hand_5"/>
    <property type="match status" value="1"/>
</dbReference>
<dbReference type="Pfam" id="PF13499">
    <property type="entry name" value="EF-hand_7"/>
    <property type="match status" value="1"/>
</dbReference>
<dbReference type="SMART" id="SM00054">
    <property type="entry name" value="EFh"/>
    <property type="match status" value="5"/>
</dbReference>
<dbReference type="SUPFAM" id="SSF47473">
    <property type="entry name" value="EF-hand"/>
    <property type="match status" value="2"/>
</dbReference>
<dbReference type="PROSITE" id="PS00018">
    <property type="entry name" value="EF_HAND_1"/>
    <property type="match status" value="4"/>
</dbReference>
<dbReference type="PROSITE" id="PS50222">
    <property type="entry name" value="EF_HAND_2"/>
    <property type="match status" value="5"/>
</dbReference>
<accession>Q91WD9</accession>
<keyword id="KW-0002">3D-structure</keyword>
<keyword id="KW-0106">Calcium</keyword>
<keyword id="KW-0963">Cytoplasm</keyword>
<keyword id="KW-0968">Cytoplasmic vesicle</keyword>
<keyword id="KW-0472">Membrane</keyword>
<keyword id="KW-0479">Metal-binding</keyword>
<keyword id="KW-1185">Reference proteome</keyword>
<keyword id="KW-0677">Repeat</keyword>
<keyword id="KW-0964">Secreted</keyword>
<gene>
    <name type="primary">Scgn</name>
</gene>
<comment type="subcellular location">
    <subcellularLocation>
        <location>Cytoplasm</location>
    </subcellularLocation>
    <subcellularLocation>
        <location evidence="1">Secreted</location>
    </subcellularLocation>
    <subcellularLocation>
        <location evidence="1">Cytoplasmic vesicle</location>
        <location evidence="1">Secretory vesicle membrane</location>
        <topology evidence="1">Peripheral membrane protein</topology>
        <orientation evidence="1">Cytoplasmic side</orientation>
    </subcellularLocation>
    <text evidence="1">Predominantly cytoplasmic. A small proportion is associated with secretory granules and membrane fractions (By similarity).</text>
</comment>
<protein>
    <recommendedName>
        <fullName>Secretagogin</fullName>
    </recommendedName>
</protein>
<sequence>MDNARRKTPARLDAACFWQIWQRFDKEEKGYIRETELDAFFDHLLAKSGTEDTLMEENVQKVKEQLMTSHNVSKEGRILMKELASMFLSEDENFLLFFRLETPLDNSVEFMQIWRKYDADSSGFISAAELCNFLRDLFLHHKKNISEAELEEYTSTMMKIFDKNKDGRLDLNDLARILALQENFLLQFKMDASSTEERKRDFEKIFAHYDVSKTGALEGPEVDGFVKDMMELVQPSISGVDLDKFREILLRHCDVNKDGKIQKSELALCLGLKINP</sequence>
<organism>
    <name type="scientific">Mus musculus</name>
    <name type="common">Mouse</name>
    <dbReference type="NCBI Taxonomy" id="10090"/>
    <lineage>
        <taxon>Eukaryota</taxon>
        <taxon>Metazoa</taxon>
        <taxon>Chordata</taxon>
        <taxon>Craniata</taxon>
        <taxon>Vertebrata</taxon>
        <taxon>Euteleostomi</taxon>
        <taxon>Mammalia</taxon>
        <taxon>Eutheria</taxon>
        <taxon>Euarchontoglires</taxon>
        <taxon>Glires</taxon>
        <taxon>Rodentia</taxon>
        <taxon>Myomorpha</taxon>
        <taxon>Muroidea</taxon>
        <taxon>Muridae</taxon>
        <taxon>Murinae</taxon>
        <taxon>Mus</taxon>
        <taxon>Mus</taxon>
    </lineage>
</organism>
<reference key="1">
    <citation type="journal article" date="2004" name="Genome Res.">
        <title>The status, quality, and expansion of the NIH full-length cDNA project: the Mammalian Gene Collection (MGC).</title>
        <authorList>
            <consortium name="The MGC Project Team"/>
        </authorList>
    </citation>
    <scope>NUCLEOTIDE SEQUENCE [LARGE SCALE MRNA]</scope>
    <source>
        <strain>C57BL/6J</strain>
        <tissue>Eye</tissue>
    </source>
</reference>
<name>SEGN_MOUSE</name>
<evidence type="ECO:0000250" key="1"/>
<evidence type="ECO:0000255" key="2">
    <source>
        <dbReference type="PROSITE-ProRule" id="PRU00448"/>
    </source>
</evidence>
<evidence type="ECO:0000305" key="3"/>
<evidence type="ECO:0007829" key="4">
    <source>
        <dbReference type="PDB" id="8BAN"/>
    </source>
</evidence>
<proteinExistence type="evidence at protein level"/>